<reference key="1">
    <citation type="journal article" date="2008" name="Environ. Microbiol.">
        <title>The complete genome sequence of Moorella thermoacetica (f. Clostridium thermoaceticum).</title>
        <authorList>
            <person name="Pierce E."/>
            <person name="Xie G."/>
            <person name="Barabote R.D."/>
            <person name="Saunders E."/>
            <person name="Han C.S."/>
            <person name="Detter J.C."/>
            <person name="Richardson P."/>
            <person name="Brettin T.S."/>
            <person name="Das A."/>
            <person name="Ljungdahl L.G."/>
            <person name="Ragsdale S.W."/>
        </authorList>
    </citation>
    <scope>NUCLEOTIDE SEQUENCE [LARGE SCALE GENOMIC DNA]</scope>
    <source>
        <strain>ATCC 39073 / JCM 9320</strain>
    </source>
</reference>
<comment type="function">
    <text evidence="1">Specifically methylates guanosine-37 in various tRNAs.</text>
</comment>
<comment type="catalytic activity">
    <reaction evidence="1">
        <text>guanosine(37) in tRNA + S-adenosyl-L-methionine = N(1)-methylguanosine(37) in tRNA + S-adenosyl-L-homocysteine + H(+)</text>
        <dbReference type="Rhea" id="RHEA:36899"/>
        <dbReference type="Rhea" id="RHEA-COMP:10145"/>
        <dbReference type="Rhea" id="RHEA-COMP:10147"/>
        <dbReference type="ChEBI" id="CHEBI:15378"/>
        <dbReference type="ChEBI" id="CHEBI:57856"/>
        <dbReference type="ChEBI" id="CHEBI:59789"/>
        <dbReference type="ChEBI" id="CHEBI:73542"/>
        <dbReference type="ChEBI" id="CHEBI:74269"/>
        <dbReference type="EC" id="2.1.1.228"/>
    </reaction>
</comment>
<comment type="subunit">
    <text evidence="1">Homodimer.</text>
</comment>
<comment type="subcellular location">
    <subcellularLocation>
        <location evidence="1">Cytoplasm</location>
    </subcellularLocation>
</comment>
<comment type="similarity">
    <text evidence="1">Belongs to the RNA methyltransferase TrmD family.</text>
</comment>
<name>TRMD_MOOTA</name>
<dbReference type="EC" id="2.1.1.228" evidence="1"/>
<dbReference type="EMBL" id="CP000232">
    <property type="protein sequence ID" value="ABC19285.1"/>
    <property type="molecule type" value="Genomic_DNA"/>
</dbReference>
<dbReference type="RefSeq" id="YP_429828.1">
    <property type="nucleotide sequence ID" value="NC_007644.1"/>
</dbReference>
<dbReference type="SMR" id="Q2RJV4"/>
<dbReference type="STRING" id="264732.Moth_0970"/>
<dbReference type="EnsemblBacteria" id="ABC19285">
    <property type="protein sequence ID" value="ABC19285"/>
    <property type="gene ID" value="Moth_0970"/>
</dbReference>
<dbReference type="KEGG" id="mta:Moth_0970"/>
<dbReference type="PATRIC" id="fig|264732.11.peg.1044"/>
<dbReference type="eggNOG" id="COG0336">
    <property type="taxonomic scope" value="Bacteria"/>
</dbReference>
<dbReference type="HOGENOM" id="CLU_047363_0_1_9"/>
<dbReference type="OrthoDB" id="9807416at2"/>
<dbReference type="GO" id="GO:0005829">
    <property type="term" value="C:cytosol"/>
    <property type="evidence" value="ECO:0007669"/>
    <property type="project" value="TreeGrafter"/>
</dbReference>
<dbReference type="GO" id="GO:0052906">
    <property type="term" value="F:tRNA (guanine(37)-N1)-methyltransferase activity"/>
    <property type="evidence" value="ECO:0007669"/>
    <property type="project" value="UniProtKB-UniRule"/>
</dbReference>
<dbReference type="GO" id="GO:0002939">
    <property type="term" value="P:tRNA N1-guanine methylation"/>
    <property type="evidence" value="ECO:0007669"/>
    <property type="project" value="TreeGrafter"/>
</dbReference>
<dbReference type="CDD" id="cd18080">
    <property type="entry name" value="TrmD-like"/>
    <property type="match status" value="1"/>
</dbReference>
<dbReference type="FunFam" id="1.10.1270.20:FF:000001">
    <property type="entry name" value="tRNA (guanine-N(1)-)-methyltransferase"/>
    <property type="match status" value="1"/>
</dbReference>
<dbReference type="FunFam" id="3.40.1280.10:FF:000001">
    <property type="entry name" value="tRNA (guanine-N(1)-)-methyltransferase"/>
    <property type="match status" value="1"/>
</dbReference>
<dbReference type="Gene3D" id="3.40.1280.10">
    <property type="match status" value="1"/>
</dbReference>
<dbReference type="Gene3D" id="1.10.1270.20">
    <property type="entry name" value="tRNA(m1g37)methyltransferase, domain 2"/>
    <property type="match status" value="1"/>
</dbReference>
<dbReference type="HAMAP" id="MF_00605">
    <property type="entry name" value="TrmD"/>
    <property type="match status" value="1"/>
</dbReference>
<dbReference type="InterPro" id="IPR029028">
    <property type="entry name" value="Alpha/beta_knot_MTases"/>
</dbReference>
<dbReference type="InterPro" id="IPR023148">
    <property type="entry name" value="tRNA_m1G_MeTrfase_C_sf"/>
</dbReference>
<dbReference type="InterPro" id="IPR002649">
    <property type="entry name" value="tRNA_m1G_MeTrfase_TrmD"/>
</dbReference>
<dbReference type="InterPro" id="IPR029026">
    <property type="entry name" value="tRNA_m1G_MTases_N"/>
</dbReference>
<dbReference type="InterPro" id="IPR016009">
    <property type="entry name" value="tRNA_MeTrfase_TRMD/TRM10"/>
</dbReference>
<dbReference type="NCBIfam" id="NF000648">
    <property type="entry name" value="PRK00026.1"/>
    <property type="match status" value="1"/>
</dbReference>
<dbReference type="NCBIfam" id="TIGR00088">
    <property type="entry name" value="trmD"/>
    <property type="match status" value="1"/>
</dbReference>
<dbReference type="PANTHER" id="PTHR46417">
    <property type="entry name" value="TRNA (GUANINE-N(1)-)-METHYLTRANSFERASE"/>
    <property type="match status" value="1"/>
</dbReference>
<dbReference type="PANTHER" id="PTHR46417:SF1">
    <property type="entry name" value="TRNA (GUANINE-N(1)-)-METHYLTRANSFERASE"/>
    <property type="match status" value="1"/>
</dbReference>
<dbReference type="Pfam" id="PF01746">
    <property type="entry name" value="tRNA_m1G_MT"/>
    <property type="match status" value="1"/>
</dbReference>
<dbReference type="PIRSF" id="PIRSF000386">
    <property type="entry name" value="tRNA_mtase"/>
    <property type="match status" value="1"/>
</dbReference>
<dbReference type="SUPFAM" id="SSF75217">
    <property type="entry name" value="alpha/beta knot"/>
    <property type="match status" value="1"/>
</dbReference>
<protein>
    <recommendedName>
        <fullName evidence="1">tRNA (guanine-N(1)-)-methyltransferase</fullName>
        <ecNumber evidence="1">2.1.1.228</ecNumber>
    </recommendedName>
    <alternativeName>
        <fullName evidence="1">M1G-methyltransferase</fullName>
    </alternativeName>
    <alternativeName>
        <fullName evidence="1">tRNA [GM37] methyltransferase</fullName>
    </alternativeName>
</protein>
<evidence type="ECO:0000255" key="1">
    <source>
        <dbReference type="HAMAP-Rule" id="MF_00605"/>
    </source>
</evidence>
<organism>
    <name type="scientific">Moorella thermoacetica (strain ATCC 39073 / JCM 9320)</name>
    <dbReference type="NCBI Taxonomy" id="264732"/>
    <lineage>
        <taxon>Bacteria</taxon>
        <taxon>Bacillati</taxon>
        <taxon>Bacillota</taxon>
        <taxon>Clostridia</taxon>
        <taxon>Moorellales</taxon>
        <taxon>Moorellaceae</taxon>
        <taxon>Moorella</taxon>
    </lineage>
</organism>
<gene>
    <name evidence="1" type="primary">trmD</name>
    <name type="ordered locus">Moth_0970</name>
</gene>
<proteinExistence type="inferred from homology"/>
<feature type="chain" id="PRO_0000257432" description="tRNA (guanine-N(1)-)-methyltransferase">
    <location>
        <begin position="1"/>
        <end position="250"/>
    </location>
</feature>
<feature type="binding site" evidence="1">
    <location>
        <position position="114"/>
    </location>
    <ligand>
        <name>S-adenosyl-L-methionine</name>
        <dbReference type="ChEBI" id="CHEBI:59789"/>
    </ligand>
</feature>
<feature type="binding site" evidence="1">
    <location>
        <begin position="134"/>
        <end position="139"/>
    </location>
    <ligand>
        <name>S-adenosyl-L-methionine</name>
        <dbReference type="ChEBI" id="CHEBI:59789"/>
    </ligand>
</feature>
<accession>Q2RJV4</accession>
<keyword id="KW-0963">Cytoplasm</keyword>
<keyword id="KW-0489">Methyltransferase</keyword>
<keyword id="KW-0949">S-adenosyl-L-methionine</keyword>
<keyword id="KW-0808">Transferase</keyword>
<keyword id="KW-0819">tRNA processing</keyword>
<sequence>MRVDVLTIFPEMFTGFLNTSIIKRAREQGRLEVNLVNIRAYARNKHRNVDDYPFGGGPGMVMQAEPLFLAVEDLLPGGEAARPPVILMSPQGEAFNQGMAEELAREEHLILICGHYEGVDERVRLALVTREISIGDYVLTGGELPAMVIIDAVTRLLPGVLGAPEGAREDSFAMGLLEYPQYTRPRSFRGLEVPEVLLSGNHEQIRRWRRQQALERTWRRRPDLLARVNLSPEDRRFLEEISRREGERTP</sequence>